<dbReference type="EC" id="6.1.1.6" evidence="1"/>
<dbReference type="EMBL" id="CP000077">
    <property type="protein sequence ID" value="AAY79494.1"/>
    <property type="molecule type" value="Genomic_DNA"/>
</dbReference>
<dbReference type="SMR" id="Q4JCI5"/>
<dbReference type="STRING" id="330779.Saci_0067"/>
<dbReference type="KEGG" id="sai:Saci_0067"/>
<dbReference type="PATRIC" id="fig|330779.12.peg.61"/>
<dbReference type="eggNOG" id="arCOG00408">
    <property type="taxonomic scope" value="Archaea"/>
</dbReference>
<dbReference type="HOGENOM" id="CLU_008255_6_0_2"/>
<dbReference type="Proteomes" id="UP000001018">
    <property type="component" value="Chromosome"/>
</dbReference>
<dbReference type="GO" id="GO:0005829">
    <property type="term" value="C:cytosol"/>
    <property type="evidence" value="ECO:0007669"/>
    <property type="project" value="TreeGrafter"/>
</dbReference>
<dbReference type="GO" id="GO:0005524">
    <property type="term" value="F:ATP binding"/>
    <property type="evidence" value="ECO:0007669"/>
    <property type="project" value="UniProtKB-UniRule"/>
</dbReference>
<dbReference type="GO" id="GO:0004824">
    <property type="term" value="F:lysine-tRNA ligase activity"/>
    <property type="evidence" value="ECO:0007669"/>
    <property type="project" value="UniProtKB-UniRule"/>
</dbReference>
<dbReference type="GO" id="GO:0000287">
    <property type="term" value="F:magnesium ion binding"/>
    <property type="evidence" value="ECO:0007669"/>
    <property type="project" value="UniProtKB-UniRule"/>
</dbReference>
<dbReference type="GO" id="GO:0000049">
    <property type="term" value="F:tRNA binding"/>
    <property type="evidence" value="ECO:0007669"/>
    <property type="project" value="TreeGrafter"/>
</dbReference>
<dbReference type="GO" id="GO:0006430">
    <property type="term" value="P:lysyl-tRNA aminoacylation"/>
    <property type="evidence" value="ECO:0007669"/>
    <property type="project" value="UniProtKB-UniRule"/>
</dbReference>
<dbReference type="CDD" id="cd04322">
    <property type="entry name" value="LysRS_N"/>
    <property type="match status" value="1"/>
</dbReference>
<dbReference type="Gene3D" id="3.30.930.10">
    <property type="entry name" value="Bira Bifunctional Protein, Domain 2"/>
    <property type="match status" value="1"/>
</dbReference>
<dbReference type="Gene3D" id="2.40.50.140">
    <property type="entry name" value="Nucleic acid-binding proteins"/>
    <property type="match status" value="1"/>
</dbReference>
<dbReference type="HAMAP" id="MF_00252">
    <property type="entry name" value="Lys_tRNA_synth_class2"/>
    <property type="match status" value="1"/>
</dbReference>
<dbReference type="InterPro" id="IPR004364">
    <property type="entry name" value="Aa-tRNA-synt_II"/>
</dbReference>
<dbReference type="InterPro" id="IPR006195">
    <property type="entry name" value="aa-tRNA-synth_II"/>
</dbReference>
<dbReference type="InterPro" id="IPR045864">
    <property type="entry name" value="aa-tRNA-synth_II/BPL/LPL"/>
</dbReference>
<dbReference type="InterPro" id="IPR002313">
    <property type="entry name" value="Lys-tRNA-ligase_II"/>
</dbReference>
<dbReference type="InterPro" id="IPR044136">
    <property type="entry name" value="Lys-tRNA-ligase_II_N"/>
</dbReference>
<dbReference type="InterPro" id="IPR018149">
    <property type="entry name" value="Lys-tRNA-synth_II_C"/>
</dbReference>
<dbReference type="InterPro" id="IPR012340">
    <property type="entry name" value="NA-bd_OB-fold"/>
</dbReference>
<dbReference type="InterPro" id="IPR004365">
    <property type="entry name" value="NA-bd_OB_tRNA"/>
</dbReference>
<dbReference type="NCBIfam" id="TIGR00499">
    <property type="entry name" value="lysS_bact"/>
    <property type="match status" value="1"/>
</dbReference>
<dbReference type="NCBIfam" id="NF001756">
    <property type="entry name" value="PRK00484.1"/>
    <property type="match status" value="1"/>
</dbReference>
<dbReference type="PANTHER" id="PTHR42918:SF15">
    <property type="entry name" value="LYSINE--TRNA LIGASE, CHLOROPLASTIC_MITOCHONDRIAL"/>
    <property type="match status" value="1"/>
</dbReference>
<dbReference type="PANTHER" id="PTHR42918">
    <property type="entry name" value="LYSYL-TRNA SYNTHETASE"/>
    <property type="match status" value="1"/>
</dbReference>
<dbReference type="Pfam" id="PF00152">
    <property type="entry name" value="tRNA-synt_2"/>
    <property type="match status" value="1"/>
</dbReference>
<dbReference type="Pfam" id="PF01336">
    <property type="entry name" value="tRNA_anti-codon"/>
    <property type="match status" value="1"/>
</dbReference>
<dbReference type="PRINTS" id="PR00982">
    <property type="entry name" value="TRNASYNTHLYS"/>
</dbReference>
<dbReference type="SUPFAM" id="SSF55681">
    <property type="entry name" value="Class II aaRS and biotin synthetases"/>
    <property type="match status" value="1"/>
</dbReference>
<dbReference type="SUPFAM" id="SSF50249">
    <property type="entry name" value="Nucleic acid-binding proteins"/>
    <property type="match status" value="1"/>
</dbReference>
<dbReference type="PROSITE" id="PS50862">
    <property type="entry name" value="AA_TRNA_LIGASE_II"/>
    <property type="match status" value="1"/>
</dbReference>
<sequence length="500" mass="58465">MFHIIDLALKWDERRVKIVDELKSKGINPYPHKYDITHTIIDIKKMERSDKPTDAFAFDISTAGRVANIRRHGKISFVDIFDEGERLQLQLRVNELGDRYDKFFEIVDRGDILGVKGDLLYTIKGELTLRIKDYVLLSKSLIEPPDWSKLSPEFRYAHRYVDFLYNDLARRNMEIRYSTIRRIREFLYSKGFMEVETPILQPVYGGALAKPFMSHVNYLNENWYLRISLELYLKRYIVGGFNKVFEIGKVFRNEDIDVTHNPEFTLLELYWAYADYNDIMRLTEEMLQDVVKNINNDSKIKYSIGGKEYTIEFSQFRKITMIDSLTEVLGKDVDKMSDEELKSLMDKNGLKPRGNMYIRGLMIEKLFDKLVTPTLIQPTFVLDYPVETTPLCKPHRSKQGLVERFELYVAGMELANAYTELNDPIIQDMLFKQEQEMFKRGDEEAHPYDVDFVRALSYGMPPTGGLGIGIDRLIMLLTNNMSIKEIIPYPMLSAKVIQED</sequence>
<accession>Q4JCI5</accession>
<keyword id="KW-0030">Aminoacyl-tRNA synthetase</keyword>
<keyword id="KW-0067">ATP-binding</keyword>
<keyword id="KW-0963">Cytoplasm</keyword>
<keyword id="KW-0436">Ligase</keyword>
<keyword id="KW-0460">Magnesium</keyword>
<keyword id="KW-0479">Metal-binding</keyword>
<keyword id="KW-0547">Nucleotide-binding</keyword>
<keyword id="KW-0648">Protein biosynthesis</keyword>
<keyword id="KW-1185">Reference proteome</keyword>
<evidence type="ECO:0000255" key="1">
    <source>
        <dbReference type="HAMAP-Rule" id="MF_00252"/>
    </source>
</evidence>
<feature type="chain" id="PRO_0000152713" description="Lysine--tRNA ligase">
    <location>
        <begin position="1"/>
        <end position="500"/>
    </location>
</feature>
<feature type="binding site" evidence="1">
    <location>
        <position position="406"/>
    </location>
    <ligand>
        <name>Mg(2+)</name>
        <dbReference type="ChEBI" id="CHEBI:18420"/>
        <label>1</label>
    </ligand>
</feature>
<feature type="binding site" evidence="1">
    <location>
        <position position="413"/>
    </location>
    <ligand>
        <name>Mg(2+)</name>
        <dbReference type="ChEBI" id="CHEBI:18420"/>
        <label>1</label>
    </ligand>
</feature>
<feature type="binding site" evidence="1">
    <location>
        <position position="413"/>
    </location>
    <ligand>
        <name>Mg(2+)</name>
        <dbReference type="ChEBI" id="CHEBI:18420"/>
        <label>2</label>
    </ligand>
</feature>
<name>SYK_SULAC</name>
<comment type="catalytic activity">
    <reaction evidence="1">
        <text>tRNA(Lys) + L-lysine + ATP = L-lysyl-tRNA(Lys) + AMP + diphosphate</text>
        <dbReference type="Rhea" id="RHEA:20792"/>
        <dbReference type="Rhea" id="RHEA-COMP:9696"/>
        <dbReference type="Rhea" id="RHEA-COMP:9697"/>
        <dbReference type="ChEBI" id="CHEBI:30616"/>
        <dbReference type="ChEBI" id="CHEBI:32551"/>
        <dbReference type="ChEBI" id="CHEBI:33019"/>
        <dbReference type="ChEBI" id="CHEBI:78442"/>
        <dbReference type="ChEBI" id="CHEBI:78529"/>
        <dbReference type="ChEBI" id="CHEBI:456215"/>
        <dbReference type="EC" id="6.1.1.6"/>
    </reaction>
</comment>
<comment type="cofactor">
    <cofactor evidence="1">
        <name>Mg(2+)</name>
        <dbReference type="ChEBI" id="CHEBI:18420"/>
    </cofactor>
    <text evidence="1">Binds 3 Mg(2+) ions per subunit.</text>
</comment>
<comment type="subunit">
    <text evidence="1">Homodimer.</text>
</comment>
<comment type="subcellular location">
    <subcellularLocation>
        <location>Cytoplasm</location>
    </subcellularLocation>
</comment>
<comment type="similarity">
    <text evidence="1">Belongs to the class-II aminoacyl-tRNA synthetase family.</text>
</comment>
<organism>
    <name type="scientific">Sulfolobus acidocaldarius (strain ATCC 33909 / DSM 639 / JCM 8929 / NBRC 15157 / NCIMB 11770)</name>
    <dbReference type="NCBI Taxonomy" id="330779"/>
    <lineage>
        <taxon>Archaea</taxon>
        <taxon>Thermoproteota</taxon>
        <taxon>Thermoprotei</taxon>
        <taxon>Sulfolobales</taxon>
        <taxon>Sulfolobaceae</taxon>
        <taxon>Sulfolobus</taxon>
    </lineage>
</organism>
<reference key="1">
    <citation type="journal article" date="2005" name="J. Bacteriol.">
        <title>The genome of Sulfolobus acidocaldarius, a model organism of the Crenarchaeota.</title>
        <authorList>
            <person name="Chen L."/>
            <person name="Bruegger K."/>
            <person name="Skovgaard M."/>
            <person name="Redder P."/>
            <person name="She Q."/>
            <person name="Torarinsson E."/>
            <person name="Greve B."/>
            <person name="Awayez M."/>
            <person name="Zibat A."/>
            <person name="Klenk H.-P."/>
            <person name="Garrett R.A."/>
        </authorList>
    </citation>
    <scope>NUCLEOTIDE SEQUENCE [LARGE SCALE GENOMIC DNA]</scope>
    <source>
        <strain>ATCC 33909 / DSM 639 / JCM 8929 / NBRC 15157 / NCIMB 11770</strain>
    </source>
</reference>
<protein>
    <recommendedName>
        <fullName evidence="1">Lysine--tRNA ligase</fullName>
        <ecNumber evidence="1">6.1.1.6</ecNumber>
    </recommendedName>
    <alternativeName>
        <fullName evidence="1">Lysyl-tRNA synthetase</fullName>
        <shortName evidence="1">LysRS</shortName>
    </alternativeName>
</protein>
<proteinExistence type="inferred from homology"/>
<gene>
    <name evidence="1" type="primary">lysS</name>
    <name type="ordered locus">Saci_0067</name>
</gene>